<organism>
    <name type="scientific">Danio rerio</name>
    <name type="common">Zebrafish</name>
    <name type="synonym">Brachydanio rerio</name>
    <dbReference type="NCBI Taxonomy" id="7955"/>
    <lineage>
        <taxon>Eukaryota</taxon>
        <taxon>Metazoa</taxon>
        <taxon>Chordata</taxon>
        <taxon>Craniata</taxon>
        <taxon>Vertebrata</taxon>
        <taxon>Euteleostomi</taxon>
        <taxon>Actinopterygii</taxon>
        <taxon>Neopterygii</taxon>
        <taxon>Teleostei</taxon>
        <taxon>Ostariophysi</taxon>
        <taxon>Cypriniformes</taxon>
        <taxon>Danionidae</taxon>
        <taxon>Danioninae</taxon>
        <taxon>Danio</taxon>
    </lineage>
</organism>
<protein>
    <recommendedName>
        <fullName>DnaJ homolog subfamily C member 21</fullName>
    </recommendedName>
    <alternativeName>
        <fullName>DnaJ homolog subfamily A member 5</fullName>
    </alternativeName>
</protein>
<comment type="function">
    <text>May act as a co-chaperone for HSP70.</text>
</comment>
<proteinExistence type="evidence at transcript level"/>
<feature type="chain" id="PRO_0000281476" description="DnaJ homolog subfamily C member 21">
    <location>
        <begin position="1"/>
        <end position="545"/>
    </location>
</feature>
<feature type="domain" description="J" evidence="3">
    <location>
        <begin position="3"/>
        <end position="69"/>
    </location>
</feature>
<feature type="zinc finger region" description="C2H2-type 1" evidence="2">
    <location>
        <begin position="323"/>
        <end position="347"/>
    </location>
</feature>
<feature type="zinc finger region" description="C2H2-type 2" evidence="2">
    <location>
        <begin position="498"/>
        <end position="522"/>
    </location>
</feature>
<feature type="region of interest" description="Disordered" evidence="4">
    <location>
        <begin position="122"/>
        <end position="141"/>
    </location>
</feature>
<feature type="region of interest" description="Disordered" evidence="4">
    <location>
        <begin position="276"/>
        <end position="302"/>
    </location>
</feature>
<feature type="region of interest" description="Disordered" evidence="4">
    <location>
        <begin position="331"/>
        <end position="497"/>
    </location>
</feature>
<feature type="region of interest" description="Disordered" evidence="4">
    <location>
        <begin position="522"/>
        <end position="545"/>
    </location>
</feature>
<feature type="coiled-coil region" evidence="1">
    <location>
        <begin position="180"/>
        <end position="286"/>
    </location>
</feature>
<feature type="compositionally biased region" description="Acidic residues" evidence="4">
    <location>
        <begin position="129"/>
        <end position="141"/>
    </location>
</feature>
<feature type="compositionally biased region" description="Acidic residues" evidence="4">
    <location>
        <begin position="283"/>
        <end position="295"/>
    </location>
</feature>
<feature type="compositionally biased region" description="Basic residues" evidence="4">
    <location>
        <begin position="339"/>
        <end position="348"/>
    </location>
</feature>
<feature type="compositionally biased region" description="Acidic residues" evidence="4">
    <location>
        <begin position="372"/>
        <end position="388"/>
    </location>
</feature>
<feature type="compositionally biased region" description="Basic residues" evidence="4">
    <location>
        <begin position="394"/>
        <end position="406"/>
    </location>
</feature>
<feature type="compositionally biased region" description="Basic residues" evidence="4">
    <location>
        <begin position="535"/>
        <end position="545"/>
    </location>
</feature>
<dbReference type="EMBL" id="BC056785">
    <property type="protein sequence ID" value="AAH56785.1"/>
    <property type="molecule type" value="mRNA"/>
</dbReference>
<dbReference type="RefSeq" id="NP_956338.1">
    <property type="nucleotide sequence ID" value="NM_200044.1"/>
</dbReference>
<dbReference type="SMR" id="Q6PGY5"/>
<dbReference type="FunCoup" id="Q6PGY5">
    <property type="interactions" value="1533"/>
</dbReference>
<dbReference type="STRING" id="7955.ENSDARP00000140903"/>
<dbReference type="PaxDb" id="7955-ENSDARP00000074126"/>
<dbReference type="GeneID" id="336984"/>
<dbReference type="KEGG" id="dre:336984"/>
<dbReference type="AGR" id="ZFIN:ZDB-GENE-030131-8928"/>
<dbReference type="CTD" id="134218"/>
<dbReference type="ZFIN" id="ZDB-GENE-030131-8928">
    <property type="gene designation" value="dnajc21"/>
</dbReference>
<dbReference type="eggNOG" id="KOG0717">
    <property type="taxonomic scope" value="Eukaryota"/>
</dbReference>
<dbReference type="InParanoid" id="Q6PGY5"/>
<dbReference type="OrthoDB" id="5894at2759"/>
<dbReference type="PhylomeDB" id="Q6PGY5"/>
<dbReference type="PRO" id="PR:Q6PGY5"/>
<dbReference type="Proteomes" id="UP000000437">
    <property type="component" value="Chromosome 21"/>
</dbReference>
<dbReference type="GO" id="GO:0005737">
    <property type="term" value="C:cytoplasm"/>
    <property type="evidence" value="ECO:0000318"/>
    <property type="project" value="GO_Central"/>
</dbReference>
<dbReference type="GO" id="GO:0003676">
    <property type="term" value="F:nucleic acid binding"/>
    <property type="evidence" value="ECO:0007669"/>
    <property type="project" value="InterPro"/>
</dbReference>
<dbReference type="GO" id="GO:0008270">
    <property type="term" value="F:zinc ion binding"/>
    <property type="evidence" value="ECO:0007669"/>
    <property type="project" value="UniProtKB-KW"/>
</dbReference>
<dbReference type="CDD" id="cd06257">
    <property type="entry name" value="DnaJ"/>
    <property type="match status" value="1"/>
</dbReference>
<dbReference type="FunFam" id="1.10.287.110:FF:000046">
    <property type="entry name" value="dnaJ homolog subfamily C member 21"/>
    <property type="match status" value="1"/>
</dbReference>
<dbReference type="Gene3D" id="3.30.160.60">
    <property type="entry name" value="Classic Zinc Finger"/>
    <property type="match status" value="1"/>
</dbReference>
<dbReference type="Gene3D" id="1.10.287.110">
    <property type="entry name" value="DnaJ domain"/>
    <property type="match status" value="1"/>
</dbReference>
<dbReference type="InterPro" id="IPR051964">
    <property type="entry name" value="Chaperone_stress_response"/>
</dbReference>
<dbReference type="InterPro" id="IPR001623">
    <property type="entry name" value="DnaJ_domain"/>
</dbReference>
<dbReference type="InterPro" id="IPR018253">
    <property type="entry name" value="DnaJ_domain_CS"/>
</dbReference>
<dbReference type="InterPro" id="IPR036869">
    <property type="entry name" value="J_dom_sf"/>
</dbReference>
<dbReference type="InterPro" id="IPR003604">
    <property type="entry name" value="Matrin/U1-like-C_Znf_C2H2"/>
</dbReference>
<dbReference type="InterPro" id="IPR022755">
    <property type="entry name" value="Znf_C2H2_jaz"/>
</dbReference>
<dbReference type="InterPro" id="IPR036236">
    <property type="entry name" value="Znf_C2H2_sf"/>
</dbReference>
<dbReference type="InterPro" id="IPR013087">
    <property type="entry name" value="Znf_C2H2_type"/>
</dbReference>
<dbReference type="InterPro" id="IPR054076">
    <property type="entry name" value="ZUO1-like_ZHD"/>
</dbReference>
<dbReference type="PANTHER" id="PTHR44029">
    <property type="entry name" value="DNAJ HOMOLOG SUBFAMILY C MEMBER 21"/>
    <property type="match status" value="1"/>
</dbReference>
<dbReference type="PANTHER" id="PTHR44029:SF1">
    <property type="entry name" value="DNAJ HOMOLOG SUBFAMILY C MEMBER 21"/>
    <property type="match status" value="1"/>
</dbReference>
<dbReference type="Pfam" id="PF00226">
    <property type="entry name" value="DnaJ"/>
    <property type="match status" value="1"/>
</dbReference>
<dbReference type="Pfam" id="PF12171">
    <property type="entry name" value="zf-C2H2_jaz"/>
    <property type="match status" value="1"/>
</dbReference>
<dbReference type="Pfam" id="PF21884">
    <property type="entry name" value="ZUO1-like_ZHD"/>
    <property type="match status" value="1"/>
</dbReference>
<dbReference type="PRINTS" id="PR00625">
    <property type="entry name" value="JDOMAIN"/>
</dbReference>
<dbReference type="SMART" id="SM00271">
    <property type="entry name" value="DnaJ"/>
    <property type="match status" value="1"/>
</dbReference>
<dbReference type="SMART" id="SM00355">
    <property type="entry name" value="ZnF_C2H2"/>
    <property type="match status" value="2"/>
</dbReference>
<dbReference type="SMART" id="SM00451">
    <property type="entry name" value="ZnF_U1"/>
    <property type="match status" value="2"/>
</dbReference>
<dbReference type="SUPFAM" id="SSF57667">
    <property type="entry name" value="beta-beta-alpha zinc fingers"/>
    <property type="match status" value="1"/>
</dbReference>
<dbReference type="SUPFAM" id="SSF46565">
    <property type="entry name" value="Chaperone J-domain"/>
    <property type="match status" value="1"/>
</dbReference>
<dbReference type="PROSITE" id="PS00636">
    <property type="entry name" value="DNAJ_1"/>
    <property type="match status" value="1"/>
</dbReference>
<dbReference type="PROSITE" id="PS50076">
    <property type="entry name" value="DNAJ_2"/>
    <property type="match status" value="1"/>
</dbReference>
<dbReference type="PROSITE" id="PS00028">
    <property type="entry name" value="ZINC_FINGER_C2H2_1"/>
    <property type="match status" value="2"/>
</dbReference>
<dbReference type="PROSITE" id="PS50157">
    <property type="entry name" value="ZINC_FINGER_C2H2_2"/>
    <property type="match status" value="1"/>
</dbReference>
<evidence type="ECO:0000255" key="1"/>
<evidence type="ECO:0000255" key="2">
    <source>
        <dbReference type="PROSITE-ProRule" id="PRU00042"/>
    </source>
</evidence>
<evidence type="ECO:0000255" key="3">
    <source>
        <dbReference type="PROSITE-ProRule" id="PRU00286"/>
    </source>
</evidence>
<evidence type="ECO:0000256" key="4">
    <source>
        <dbReference type="SAM" id="MobiDB-lite"/>
    </source>
</evidence>
<name>DJC21_DANRE</name>
<reference key="1">
    <citation type="submission" date="2003-08" db="EMBL/GenBank/DDBJ databases">
        <authorList>
            <consortium name="NIH - Zebrafish Gene Collection (ZGC) project"/>
        </authorList>
    </citation>
    <scope>NUCLEOTIDE SEQUENCE [LARGE SCALE MRNA]</scope>
    <source>
        <strain>AB</strain>
    </source>
</reference>
<gene>
    <name type="primary">dnajc21</name>
    <name type="synonym">dnaja5</name>
    <name type="ORF">zgc:63563</name>
</gene>
<keyword id="KW-0143">Chaperone</keyword>
<keyword id="KW-0175">Coiled coil</keyword>
<keyword id="KW-0479">Metal-binding</keyword>
<keyword id="KW-1185">Reference proteome</keyword>
<keyword id="KW-0677">Repeat</keyword>
<keyword id="KW-0862">Zinc</keyword>
<keyword id="KW-0863">Zinc-finger</keyword>
<sequence length="545" mass="62766">MKCHYEVLGVKRDASDDDLKKAYRKLALKWHPDKNLDNAEDAAEQFKLIQAAYDVLSDPQERAWYDNHREALLKGGVSGEYQDDSIDLVQFFTVTCYSGYGDDEKGFYAVYRNVFESIVKEEKEHSKDEEDEEDEFPSFGESESDYDTVVHLFYGYWQSFCTRKNFAWKEEYDTRQASNRWEKRAMEKENKKTRDKARKEHNELVRQLVAFVRKRDKRVQAHKKLVEEQNAEKAKKVEELRRKQKLSQAKLAEDYQEQSWTAMSELEKELQQMEAEYGQEFGDASDSEENEEELESRDIANVDGVDAVMADGAAEMDDYYDDLYCPACDKSFKSDKAMKNHSKSKKHREMVALLRQQLEEEDESLSQNCAEREEDDEEEDDDDDDEQNDTSKQKLSKRQKKKKRLQKPVNNLPEAPETVSPVPQSTEEHLSPAPDSGNTEDTPVPSEDPDDGVKPDGQENTNQKSTAKTKGKKGGKDSKKSSKAHGGVEAAPEKEVNLRCVTCQYEFTTRNKLFDHLKSTGHATALSSSNTSQTSKKKKDSRKNR</sequence>
<accession>Q6PGY5</accession>